<protein>
    <recommendedName>
        <fullName evidence="1">UPF0386 protein RC1_1783</fullName>
    </recommendedName>
</protein>
<dbReference type="EMBL" id="CP000613">
    <property type="protein sequence ID" value="ACI99180.1"/>
    <property type="molecule type" value="Genomic_DNA"/>
</dbReference>
<dbReference type="RefSeq" id="WP_012566965.1">
    <property type="nucleotide sequence ID" value="NC_011420.2"/>
</dbReference>
<dbReference type="KEGG" id="rce:RC1_1783"/>
<dbReference type="eggNOG" id="COG3811">
    <property type="taxonomic scope" value="Bacteria"/>
</dbReference>
<dbReference type="HOGENOM" id="CLU_164736_0_0_5"/>
<dbReference type="OrthoDB" id="7204880at2"/>
<dbReference type="Proteomes" id="UP000001591">
    <property type="component" value="Chromosome"/>
</dbReference>
<dbReference type="HAMAP" id="MF_00827">
    <property type="entry name" value="UPF0386"/>
    <property type="match status" value="1"/>
</dbReference>
<dbReference type="InterPro" id="IPR018654">
    <property type="entry name" value="YjhX_toxin"/>
</dbReference>
<dbReference type="NCBIfam" id="NF010240">
    <property type="entry name" value="PRK13687.1"/>
    <property type="match status" value="1"/>
</dbReference>
<dbReference type="Pfam" id="PF09857">
    <property type="entry name" value="YjhX_toxin"/>
    <property type="match status" value="1"/>
</dbReference>
<organism>
    <name type="scientific">Rhodospirillum centenum (strain ATCC 51521 / SW)</name>
    <dbReference type="NCBI Taxonomy" id="414684"/>
    <lineage>
        <taxon>Bacteria</taxon>
        <taxon>Pseudomonadati</taxon>
        <taxon>Pseudomonadota</taxon>
        <taxon>Alphaproteobacteria</taxon>
        <taxon>Rhodospirillales</taxon>
        <taxon>Rhodospirillaceae</taxon>
        <taxon>Rhodospirillum</taxon>
    </lineage>
</organism>
<reference key="1">
    <citation type="submission" date="2007-03" db="EMBL/GenBank/DDBJ databases">
        <title>Genome sequence of Rhodospirillum centenum.</title>
        <authorList>
            <person name="Touchman J.W."/>
            <person name="Bauer C."/>
            <person name="Blankenship R.E."/>
        </authorList>
    </citation>
    <scope>NUCLEOTIDE SEQUENCE [LARGE SCALE GENOMIC DNA]</scope>
    <source>
        <strain>ATCC 51521 / SW</strain>
    </source>
</reference>
<sequence>MNISKPEQRTLHALARGGRIDIEKDDDRRIIEVDCITREGWRLLDCDMTTFRKLRSKRLIASENGGPYRITRKGLAAVRPQPDNRS</sequence>
<keyword id="KW-1185">Reference proteome</keyword>
<comment type="similarity">
    <text evidence="1">Belongs to the UPF0386 family.</text>
</comment>
<evidence type="ECO:0000255" key="1">
    <source>
        <dbReference type="HAMAP-Rule" id="MF_00827"/>
    </source>
</evidence>
<proteinExistence type="inferred from homology"/>
<feature type="chain" id="PRO_1000200705" description="UPF0386 protein RC1_1783">
    <location>
        <begin position="1"/>
        <end position="86"/>
    </location>
</feature>
<gene>
    <name type="ordered locus">RC1_1783</name>
</gene>
<accession>B6ITG2</accession>
<name>Y1783_RHOCS</name>